<sequence>MELSWETKSAIILITVTFGLVYAWRVLNWMWLKPKKIEKLLREQGLQGNPYRLLLGDAKDYFVMQKKVQSKPMNLSDDIAPRVAPYIHHAVQTHGKKSFIWFGMKPWVILNEPEQIREVFNKMSEFPKVQYKFMKLITRGLVKLEGEKWSKHRRIINPAFHMEKLKIMTPTFLKSCNDLISNWEKMLSSNGSCEMDVWPSLQSLTSDVIARSSFGSSYEEGRKVFQLQIEQGELIMKNLMKSLIPLWRFLPTADHRKINENEKQIETTLKNIINKREKAIKAGEATENDLLGLLLESNHREIKEHGNVKNMGLSLEEVVGECRLFHVAGQETTSDLLVWTMVLLSRYPDWQERARKEVLEIFGNEKPDFDGLNKLKIMAMILYEVLRLYPPVTGVARKVENDIKLGDLTLYAGMEVYMPIVLIHHDCELWGDDAKIFNPERFSGGISKATNGRFSYFPFGAGPRICIGQNFSLLEAKMAMALILKNFSFELSQTYAHAPSVVLSVQPQHGAHVILRKIKT</sequence>
<comment type="function">
    <text evidence="3">Catalyzes the carboxylation of oleanolic acid at the C-23 position to form gypsogenic acid. Involved in the hemolytic saponin biosynthetic pathway.</text>
</comment>
<comment type="catalytic activity">
    <reaction evidence="3">
        <text>oleanolate + 3 reduced [NADPH--hemoprotein reductase] + 3 O2 = gypsogenate + 3 oxidized [NADPH--hemoprotein reductase] + 4 H2O + 4 H(+)</text>
        <dbReference type="Rhea" id="RHEA:56484"/>
        <dbReference type="Rhea" id="RHEA-COMP:11964"/>
        <dbReference type="Rhea" id="RHEA-COMP:11965"/>
        <dbReference type="ChEBI" id="CHEBI:15377"/>
        <dbReference type="ChEBI" id="CHEBI:15378"/>
        <dbReference type="ChEBI" id="CHEBI:15379"/>
        <dbReference type="ChEBI" id="CHEBI:57618"/>
        <dbReference type="ChEBI" id="CHEBI:58210"/>
        <dbReference type="ChEBI" id="CHEBI:82828"/>
        <dbReference type="ChEBI" id="CHEBI:140468"/>
    </reaction>
</comment>
<comment type="cofactor">
    <cofactor evidence="1">
        <name>heme</name>
        <dbReference type="ChEBI" id="CHEBI:30413"/>
    </cofactor>
</comment>
<comment type="subcellular location">
    <subcellularLocation>
        <location evidence="2">Membrane</location>
        <topology evidence="2">Single-pass membrane protein</topology>
    </subcellularLocation>
</comment>
<comment type="similarity">
    <text evidence="5">Belongs to the cytochrome P450 family.</text>
</comment>
<protein>
    <recommendedName>
        <fullName evidence="4">Cytochrome P450 72A68</fullName>
        <ecNumber evidence="3">1.14.14.-</ecNumber>
    </recommendedName>
</protein>
<dbReference type="EC" id="1.14.14.-" evidence="3"/>
<dbReference type="EMBL" id="DQ335782">
    <property type="protein sequence ID" value="ABC59077.1"/>
    <property type="molecule type" value="mRNA"/>
</dbReference>
<dbReference type="EMBL" id="CM001218">
    <property type="protein sequence ID" value="KEH37987.1"/>
    <property type="molecule type" value="Genomic_DNA"/>
</dbReference>
<dbReference type="RefSeq" id="XP_013463952.1">
    <property type="nucleotide sequence ID" value="XM_013608498.1"/>
</dbReference>
<dbReference type="SMR" id="Q2MJ19"/>
<dbReference type="STRING" id="3880.Q2MJ19"/>
<dbReference type="EnsemblPlants" id="rna10179">
    <property type="protein sequence ID" value="RHN74173.1"/>
    <property type="gene ID" value="gene10179"/>
</dbReference>
<dbReference type="GeneID" id="25486777"/>
<dbReference type="Gramene" id="rna10179">
    <property type="protein sequence ID" value="RHN74173.1"/>
    <property type="gene ID" value="gene10179"/>
</dbReference>
<dbReference type="KEGG" id="mtr:25486777"/>
<dbReference type="HOGENOM" id="CLU_001570_5_0_1"/>
<dbReference type="OrthoDB" id="1470350at2759"/>
<dbReference type="Proteomes" id="UP000002051">
    <property type="component" value="Chromosome 2"/>
</dbReference>
<dbReference type="ExpressionAtlas" id="Q2MJ19">
    <property type="expression patterns" value="differential"/>
</dbReference>
<dbReference type="GO" id="GO:0016020">
    <property type="term" value="C:membrane"/>
    <property type="evidence" value="ECO:0007669"/>
    <property type="project" value="UniProtKB-SubCell"/>
</dbReference>
<dbReference type="GO" id="GO:0020037">
    <property type="term" value="F:heme binding"/>
    <property type="evidence" value="ECO:0007669"/>
    <property type="project" value="InterPro"/>
</dbReference>
<dbReference type="GO" id="GO:0005506">
    <property type="term" value="F:iron ion binding"/>
    <property type="evidence" value="ECO:0007669"/>
    <property type="project" value="InterPro"/>
</dbReference>
<dbReference type="GO" id="GO:0004497">
    <property type="term" value="F:monooxygenase activity"/>
    <property type="evidence" value="ECO:0000318"/>
    <property type="project" value="GO_Central"/>
</dbReference>
<dbReference type="GO" id="GO:0016709">
    <property type="term" value="F:oxidoreductase activity, acting on paired donors, with incorporation or reduction of molecular oxygen, NAD(P)H as one donor, and incorporation of one atom of oxygen"/>
    <property type="evidence" value="ECO:0000314"/>
    <property type="project" value="UniProtKB"/>
</dbReference>
<dbReference type="GO" id="GO:0016135">
    <property type="term" value="P:saponin biosynthetic process"/>
    <property type="evidence" value="ECO:0000314"/>
    <property type="project" value="UniProtKB"/>
</dbReference>
<dbReference type="CDD" id="cd20642">
    <property type="entry name" value="CYP72"/>
    <property type="match status" value="1"/>
</dbReference>
<dbReference type="FunFam" id="1.10.630.10:FF:000029">
    <property type="entry name" value="Cytochrome P450 734A1"/>
    <property type="match status" value="1"/>
</dbReference>
<dbReference type="Gene3D" id="1.10.630.10">
    <property type="entry name" value="Cytochrome P450"/>
    <property type="match status" value="1"/>
</dbReference>
<dbReference type="InterPro" id="IPR001128">
    <property type="entry name" value="Cyt_P450"/>
</dbReference>
<dbReference type="InterPro" id="IPR017972">
    <property type="entry name" value="Cyt_P450_CS"/>
</dbReference>
<dbReference type="InterPro" id="IPR002401">
    <property type="entry name" value="Cyt_P450_E_grp-I"/>
</dbReference>
<dbReference type="InterPro" id="IPR036396">
    <property type="entry name" value="Cyt_P450_sf"/>
</dbReference>
<dbReference type="InterPro" id="IPR050665">
    <property type="entry name" value="Cytochrome_P450_Monooxygen"/>
</dbReference>
<dbReference type="PANTHER" id="PTHR24282:SF255">
    <property type="entry name" value="CYTOCHROME P450 72A11-RELATED"/>
    <property type="match status" value="1"/>
</dbReference>
<dbReference type="PANTHER" id="PTHR24282">
    <property type="entry name" value="CYTOCHROME P450 FAMILY MEMBER"/>
    <property type="match status" value="1"/>
</dbReference>
<dbReference type="Pfam" id="PF00067">
    <property type="entry name" value="p450"/>
    <property type="match status" value="1"/>
</dbReference>
<dbReference type="PRINTS" id="PR00463">
    <property type="entry name" value="EP450I"/>
</dbReference>
<dbReference type="PRINTS" id="PR00385">
    <property type="entry name" value="P450"/>
</dbReference>
<dbReference type="SUPFAM" id="SSF48264">
    <property type="entry name" value="Cytochrome P450"/>
    <property type="match status" value="1"/>
</dbReference>
<dbReference type="PROSITE" id="PS00086">
    <property type="entry name" value="CYTOCHROME_P450"/>
    <property type="match status" value="1"/>
</dbReference>
<keyword id="KW-0349">Heme</keyword>
<keyword id="KW-0408">Iron</keyword>
<keyword id="KW-0472">Membrane</keyword>
<keyword id="KW-0479">Metal-binding</keyword>
<keyword id="KW-0503">Monooxygenase</keyword>
<keyword id="KW-0560">Oxidoreductase</keyword>
<keyword id="KW-1185">Reference proteome</keyword>
<keyword id="KW-0812">Transmembrane</keyword>
<keyword id="KW-1133">Transmembrane helix</keyword>
<name>C7A68_MEDTR</name>
<organism>
    <name type="scientific">Medicago truncatula</name>
    <name type="common">Barrel medic</name>
    <name type="synonym">Medicago tribuloides</name>
    <dbReference type="NCBI Taxonomy" id="3880"/>
    <lineage>
        <taxon>Eukaryota</taxon>
        <taxon>Viridiplantae</taxon>
        <taxon>Streptophyta</taxon>
        <taxon>Embryophyta</taxon>
        <taxon>Tracheophyta</taxon>
        <taxon>Spermatophyta</taxon>
        <taxon>Magnoliopsida</taxon>
        <taxon>eudicotyledons</taxon>
        <taxon>Gunneridae</taxon>
        <taxon>Pentapetalae</taxon>
        <taxon>rosids</taxon>
        <taxon>fabids</taxon>
        <taxon>Fabales</taxon>
        <taxon>Fabaceae</taxon>
        <taxon>Papilionoideae</taxon>
        <taxon>50 kb inversion clade</taxon>
        <taxon>NPAAA clade</taxon>
        <taxon>Hologalegina</taxon>
        <taxon>IRL clade</taxon>
        <taxon>Trifolieae</taxon>
        <taxon>Medicago</taxon>
    </lineage>
</organism>
<proteinExistence type="evidence at protein level"/>
<feature type="chain" id="PRO_0000444126" description="Cytochrome P450 72A68">
    <location>
        <begin position="1"/>
        <end position="520"/>
    </location>
</feature>
<feature type="transmembrane region" description="Helical" evidence="2">
    <location>
        <begin position="11"/>
        <end position="31"/>
    </location>
</feature>
<feature type="binding site" description="axial binding residue" evidence="1">
    <location>
        <position position="466"/>
    </location>
    <ligand>
        <name>heme</name>
        <dbReference type="ChEBI" id="CHEBI:30413"/>
    </ligand>
    <ligandPart>
        <name>Fe</name>
        <dbReference type="ChEBI" id="CHEBI:18248"/>
    </ligandPart>
</feature>
<accession>Q2MJ19</accession>
<gene>
    <name evidence="4" type="primary">CYP72A68</name>
    <name evidence="6" type="ordered locus">MTR_2g055470</name>
</gene>
<reference key="1">
    <citation type="journal article" date="2007" name="Planta">
        <title>Genome-wide identification and characterization of putative cytochrome P450 genes in the model legume Medicago truncatula.</title>
        <authorList>
            <person name="Li L."/>
            <person name="Cheng H."/>
            <person name="Gai J."/>
            <person name="Yu D."/>
        </authorList>
    </citation>
    <scope>NUCLEOTIDE SEQUENCE [MRNA]</scope>
    <source>
        <strain>cv. Jemalong</strain>
    </source>
</reference>
<reference key="2">
    <citation type="journal article" date="2011" name="Nature">
        <title>The Medicago genome provides insight into the evolution of rhizobial symbioses.</title>
        <authorList>
            <person name="Young N.D."/>
            <person name="Debelle F."/>
            <person name="Oldroyd G.E.D."/>
            <person name="Geurts R."/>
            <person name="Cannon S.B."/>
            <person name="Udvardi M.K."/>
            <person name="Benedito V.A."/>
            <person name="Mayer K.F.X."/>
            <person name="Gouzy J."/>
            <person name="Schoof H."/>
            <person name="Van de Peer Y."/>
            <person name="Proost S."/>
            <person name="Cook D.R."/>
            <person name="Meyers B.C."/>
            <person name="Spannagl M."/>
            <person name="Cheung F."/>
            <person name="De Mita S."/>
            <person name="Krishnakumar V."/>
            <person name="Gundlach H."/>
            <person name="Zhou S."/>
            <person name="Mudge J."/>
            <person name="Bharti A.K."/>
            <person name="Murray J.D."/>
            <person name="Naoumkina M.A."/>
            <person name="Rosen B."/>
            <person name="Silverstein K.A.T."/>
            <person name="Tang H."/>
            <person name="Rombauts S."/>
            <person name="Zhao P.X."/>
            <person name="Zhou P."/>
            <person name="Barbe V."/>
            <person name="Bardou P."/>
            <person name="Bechner M."/>
            <person name="Bellec A."/>
            <person name="Berger A."/>
            <person name="Berges H."/>
            <person name="Bidwell S."/>
            <person name="Bisseling T."/>
            <person name="Choisne N."/>
            <person name="Couloux A."/>
            <person name="Denny R."/>
            <person name="Deshpande S."/>
            <person name="Dai X."/>
            <person name="Doyle J.J."/>
            <person name="Dudez A.-M."/>
            <person name="Farmer A.D."/>
            <person name="Fouteau S."/>
            <person name="Franken C."/>
            <person name="Gibelin C."/>
            <person name="Gish J."/>
            <person name="Goldstein S."/>
            <person name="Gonzalez A.J."/>
            <person name="Green P.J."/>
            <person name="Hallab A."/>
            <person name="Hartog M."/>
            <person name="Hua A."/>
            <person name="Humphray S.J."/>
            <person name="Jeong D.-H."/>
            <person name="Jing Y."/>
            <person name="Jocker A."/>
            <person name="Kenton S.M."/>
            <person name="Kim D.-J."/>
            <person name="Klee K."/>
            <person name="Lai H."/>
            <person name="Lang C."/>
            <person name="Lin S."/>
            <person name="Macmil S.L."/>
            <person name="Magdelenat G."/>
            <person name="Matthews L."/>
            <person name="McCorrison J."/>
            <person name="Monaghan E.L."/>
            <person name="Mun J.-H."/>
            <person name="Najar F.Z."/>
            <person name="Nicholson C."/>
            <person name="Noirot C."/>
            <person name="O'Bleness M."/>
            <person name="Paule C.R."/>
            <person name="Poulain J."/>
            <person name="Prion F."/>
            <person name="Qin B."/>
            <person name="Qu C."/>
            <person name="Retzel E.F."/>
            <person name="Riddle C."/>
            <person name="Sallet E."/>
            <person name="Samain S."/>
            <person name="Samson N."/>
            <person name="Sanders I."/>
            <person name="Saurat O."/>
            <person name="Scarpelli C."/>
            <person name="Schiex T."/>
            <person name="Segurens B."/>
            <person name="Severin A.J."/>
            <person name="Sherrier D.J."/>
            <person name="Shi R."/>
            <person name="Sims S."/>
            <person name="Singer S.R."/>
            <person name="Sinharoy S."/>
            <person name="Sterck L."/>
            <person name="Viollet A."/>
            <person name="Wang B.-B."/>
            <person name="Wang K."/>
            <person name="Wang M."/>
            <person name="Wang X."/>
            <person name="Warfsmann J."/>
            <person name="Weissenbach J."/>
            <person name="White D.D."/>
            <person name="White J.D."/>
            <person name="Wiley G.B."/>
            <person name="Wincker P."/>
            <person name="Xing Y."/>
            <person name="Yang L."/>
            <person name="Yao Z."/>
            <person name="Ying F."/>
            <person name="Zhai J."/>
            <person name="Zhou L."/>
            <person name="Zuber A."/>
            <person name="Denarie J."/>
            <person name="Dixon R.A."/>
            <person name="May G.D."/>
            <person name="Schwartz D.C."/>
            <person name="Rogers J."/>
            <person name="Quetier F."/>
            <person name="Town C.D."/>
            <person name="Roe B.A."/>
        </authorList>
    </citation>
    <scope>NUCLEOTIDE SEQUENCE [LARGE SCALE GENOMIC DNA]</scope>
    <source>
        <strain>cv. Jemalong A17</strain>
    </source>
</reference>
<reference key="3">
    <citation type="journal article" date="2014" name="BMC Genomics">
        <title>An improved genome release (version Mt4.0) for the model legume Medicago truncatula.</title>
        <authorList>
            <person name="Tang H."/>
            <person name="Krishnakumar V."/>
            <person name="Bidwell S."/>
            <person name="Rosen B."/>
            <person name="Chan A."/>
            <person name="Zhou S."/>
            <person name="Gentzbittel L."/>
            <person name="Childs K.L."/>
            <person name="Yandell M."/>
            <person name="Gundlach H."/>
            <person name="Mayer K.F."/>
            <person name="Schwartz D.C."/>
            <person name="Town C.D."/>
        </authorList>
    </citation>
    <scope>GENOME REANNOTATION</scope>
    <source>
        <strain>cv. Jemalong A17</strain>
    </source>
</reference>
<reference key="4">
    <citation type="journal article" date="2013" name="Plant Cell Physiol.">
        <title>Combinatorial biosynthesis of legume natural and rare triterpenoids in engineered yeast.</title>
        <authorList>
            <person name="Fukushima E.O."/>
            <person name="Seki H."/>
            <person name="Sawai S."/>
            <person name="Suzuki M."/>
            <person name="Ohyama K."/>
            <person name="Saito K."/>
            <person name="Muranaka T."/>
        </authorList>
    </citation>
    <scope>FUNCTION</scope>
    <scope>CATALYTIC ACTIVITY</scope>
    <source>
        <strain>cv. Jemalong</strain>
    </source>
</reference>
<evidence type="ECO:0000250" key="1">
    <source>
        <dbReference type="UniProtKB" id="Q96242"/>
    </source>
</evidence>
<evidence type="ECO:0000255" key="2"/>
<evidence type="ECO:0000269" key="3">
    <source>
    </source>
</evidence>
<evidence type="ECO:0000303" key="4">
    <source>
    </source>
</evidence>
<evidence type="ECO:0000305" key="5"/>
<evidence type="ECO:0000312" key="6">
    <source>
        <dbReference type="EMBL" id="KEH37987.1"/>
    </source>
</evidence>